<dbReference type="EMBL" id="AF034969">
    <property type="protein sequence ID" value="AAD09170.1"/>
    <property type="molecule type" value="Genomic_DNA"/>
</dbReference>
<dbReference type="RefSeq" id="YP_007626055.1">
    <property type="nucleotide sequence ID" value="NC_020699.1"/>
</dbReference>
<dbReference type="SMR" id="O47421"/>
<dbReference type="GeneID" id="14843231"/>
<dbReference type="CTD" id="4519"/>
<dbReference type="GO" id="GO:0005743">
    <property type="term" value="C:mitochondrial inner membrane"/>
    <property type="evidence" value="ECO:0007669"/>
    <property type="project" value="UniProtKB-SubCell"/>
</dbReference>
<dbReference type="GO" id="GO:0045275">
    <property type="term" value="C:respiratory chain complex III"/>
    <property type="evidence" value="ECO:0007669"/>
    <property type="project" value="InterPro"/>
</dbReference>
<dbReference type="GO" id="GO:0046872">
    <property type="term" value="F:metal ion binding"/>
    <property type="evidence" value="ECO:0007669"/>
    <property type="project" value="UniProtKB-KW"/>
</dbReference>
<dbReference type="GO" id="GO:0008121">
    <property type="term" value="F:ubiquinol-cytochrome-c reductase activity"/>
    <property type="evidence" value="ECO:0007669"/>
    <property type="project" value="InterPro"/>
</dbReference>
<dbReference type="GO" id="GO:0006122">
    <property type="term" value="P:mitochondrial electron transport, ubiquinol to cytochrome c"/>
    <property type="evidence" value="ECO:0007669"/>
    <property type="project" value="TreeGrafter"/>
</dbReference>
<dbReference type="CDD" id="cd00290">
    <property type="entry name" value="cytochrome_b_C"/>
    <property type="match status" value="1"/>
</dbReference>
<dbReference type="CDD" id="cd00284">
    <property type="entry name" value="Cytochrome_b_N"/>
    <property type="match status" value="1"/>
</dbReference>
<dbReference type="FunFam" id="1.20.810.10:FF:000002">
    <property type="entry name" value="Cytochrome b"/>
    <property type="match status" value="1"/>
</dbReference>
<dbReference type="Gene3D" id="1.20.810.10">
    <property type="entry name" value="Cytochrome Bc1 Complex, Chain C"/>
    <property type="match status" value="1"/>
</dbReference>
<dbReference type="InterPro" id="IPR005798">
    <property type="entry name" value="Cyt_b/b6_C"/>
</dbReference>
<dbReference type="InterPro" id="IPR036150">
    <property type="entry name" value="Cyt_b/b6_C_sf"/>
</dbReference>
<dbReference type="InterPro" id="IPR005797">
    <property type="entry name" value="Cyt_b/b6_N"/>
</dbReference>
<dbReference type="InterPro" id="IPR027387">
    <property type="entry name" value="Cytb/b6-like_sf"/>
</dbReference>
<dbReference type="InterPro" id="IPR030689">
    <property type="entry name" value="Cytochrome_b"/>
</dbReference>
<dbReference type="InterPro" id="IPR048260">
    <property type="entry name" value="Cytochrome_b_C_euk/bac"/>
</dbReference>
<dbReference type="InterPro" id="IPR048259">
    <property type="entry name" value="Cytochrome_b_N_euk/bac"/>
</dbReference>
<dbReference type="InterPro" id="IPR016174">
    <property type="entry name" value="Di-haem_cyt_TM"/>
</dbReference>
<dbReference type="PANTHER" id="PTHR19271">
    <property type="entry name" value="CYTOCHROME B"/>
    <property type="match status" value="1"/>
</dbReference>
<dbReference type="PANTHER" id="PTHR19271:SF16">
    <property type="entry name" value="CYTOCHROME B"/>
    <property type="match status" value="1"/>
</dbReference>
<dbReference type="Pfam" id="PF00032">
    <property type="entry name" value="Cytochrom_B_C"/>
    <property type="match status" value="1"/>
</dbReference>
<dbReference type="Pfam" id="PF00033">
    <property type="entry name" value="Cytochrome_B"/>
    <property type="match status" value="1"/>
</dbReference>
<dbReference type="PIRSF" id="PIRSF038885">
    <property type="entry name" value="COB"/>
    <property type="match status" value="1"/>
</dbReference>
<dbReference type="SUPFAM" id="SSF81648">
    <property type="entry name" value="a domain/subunit of cytochrome bc1 complex (Ubiquinol-cytochrome c reductase)"/>
    <property type="match status" value="1"/>
</dbReference>
<dbReference type="SUPFAM" id="SSF81342">
    <property type="entry name" value="Transmembrane di-heme cytochromes"/>
    <property type="match status" value="1"/>
</dbReference>
<dbReference type="PROSITE" id="PS51003">
    <property type="entry name" value="CYTB_CTER"/>
    <property type="match status" value="1"/>
</dbReference>
<dbReference type="PROSITE" id="PS51002">
    <property type="entry name" value="CYTB_NTER"/>
    <property type="match status" value="1"/>
</dbReference>
<geneLocation type="mitochondrion"/>
<comment type="function">
    <text evidence="2">Component of the ubiquinol-cytochrome c reductase complex (complex III or cytochrome b-c1 complex) that is part of the mitochondrial respiratory chain. The b-c1 complex mediates electron transfer from ubiquinol to cytochrome c. Contributes to the generation of a proton gradient across the mitochondrial membrane that is then used for ATP synthesis.</text>
</comment>
<comment type="cofactor">
    <cofactor evidence="2">
        <name>heme b</name>
        <dbReference type="ChEBI" id="CHEBI:60344"/>
    </cofactor>
    <text evidence="2">Binds 2 heme b groups non-covalently.</text>
</comment>
<comment type="subunit">
    <text evidence="2">The cytochrome bc1 complex contains 11 subunits: 3 respiratory subunits (MT-CYB, CYC1 and UQCRFS1), 2 core proteins (UQCRC1 and UQCRC2) and 6 low-molecular weight proteins (UQCRH/QCR6, UQCRB/QCR7, UQCRQ/QCR8, UQCR10/QCR9, UQCR11/QCR10 and a cleavage product of UQCRFS1). This cytochrome bc1 complex then forms a dimer.</text>
</comment>
<comment type="subcellular location">
    <subcellularLocation>
        <location evidence="2">Mitochondrion inner membrane</location>
        <topology evidence="2">Multi-pass membrane protein</topology>
    </subcellularLocation>
</comment>
<comment type="miscellaneous">
    <text evidence="1">Heme 1 (or BL or b562) is low-potential and absorbs at about 562 nm, and heme 2 (or BH or b566) is high-potential and absorbs at about 566 nm.</text>
</comment>
<comment type="similarity">
    <text evidence="3 4">Belongs to the cytochrome b family.</text>
</comment>
<comment type="caution">
    <text evidence="2">The full-length protein contains only eight transmembrane helices, not nine as predicted by bioinformatics tools.</text>
</comment>
<protein>
    <recommendedName>
        <fullName>Cytochrome b</fullName>
    </recommendedName>
    <alternativeName>
        <fullName>Complex III subunit 3</fullName>
    </alternativeName>
    <alternativeName>
        <fullName>Complex III subunit III</fullName>
    </alternativeName>
    <alternativeName>
        <fullName>Cytochrome b-c1 complex subunit 3</fullName>
    </alternativeName>
    <alternativeName>
        <fullName>Ubiquinol-cytochrome-c reductase complex cytochrome b subunit</fullName>
    </alternativeName>
</protein>
<name>CYB_CONTA</name>
<organism>
    <name type="scientific">Connochaetes taurinus</name>
    <name type="common">Blue wildebeest</name>
    <dbReference type="NCBI Taxonomy" id="9927"/>
    <lineage>
        <taxon>Eukaryota</taxon>
        <taxon>Metazoa</taxon>
        <taxon>Chordata</taxon>
        <taxon>Craniata</taxon>
        <taxon>Vertebrata</taxon>
        <taxon>Euteleostomi</taxon>
        <taxon>Mammalia</taxon>
        <taxon>Eutheria</taxon>
        <taxon>Laurasiatheria</taxon>
        <taxon>Artiodactyla</taxon>
        <taxon>Ruminantia</taxon>
        <taxon>Pecora</taxon>
        <taxon>Bovidae</taxon>
        <taxon>Alcelaphinae</taxon>
        <taxon>Connochaetes</taxon>
    </lineage>
</organism>
<evidence type="ECO:0000250" key="1"/>
<evidence type="ECO:0000250" key="2">
    <source>
        <dbReference type="UniProtKB" id="P00157"/>
    </source>
</evidence>
<evidence type="ECO:0000255" key="3">
    <source>
        <dbReference type="PROSITE-ProRule" id="PRU00967"/>
    </source>
</evidence>
<evidence type="ECO:0000255" key="4">
    <source>
        <dbReference type="PROSITE-ProRule" id="PRU00968"/>
    </source>
</evidence>
<gene>
    <name type="primary">MT-CYB</name>
    <name type="synonym">COB</name>
    <name type="synonym">CYTB</name>
    <name type="synonym">MTCYB</name>
</gene>
<sequence length="379" mass="42665">MTNIRKTHPLMKIVNNAFIDLPAPSNISSWWNFGSLLGICLILQILTGLFLAMHYTSDTTTAFSSVTHICRDVNYGWIIRYMHANGASMFFICLFLHVGRGLYYGSYTFLETWNVGVILLFATMATAFMGYVLPWGQMSFWGATVITNLLSAIPYIGTNLVEWIWGGFSVDKATLTRFFAFHFILPFIITALAMVHLLFLHETGSNNPTGISSDTDKIPFHPYYTIKDILGALLLILALMLLVLFAPDLLGDPDNYTPANPLNTPPHIKPEWYFLFAYAILRSIPNKLGGVLALVLSILILVLMPLLHTSKQRSMMFRPISQCMFWILVADLLTLTWIGGQPVEHPYIIIGQLASIMYFLLILVLMPAASTIENNLLKW</sequence>
<accession>O47421</accession>
<keyword id="KW-0249">Electron transport</keyword>
<keyword id="KW-0349">Heme</keyword>
<keyword id="KW-0408">Iron</keyword>
<keyword id="KW-0472">Membrane</keyword>
<keyword id="KW-0479">Metal-binding</keyword>
<keyword id="KW-0496">Mitochondrion</keyword>
<keyword id="KW-0999">Mitochondrion inner membrane</keyword>
<keyword id="KW-0679">Respiratory chain</keyword>
<keyword id="KW-0812">Transmembrane</keyword>
<keyword id="KW-1133">Transmembrane helix</keyword>
<keyword id="KW-0813">Transport</keyword>
<keyword id="KW-0830">Ubiquinone</keyword>
<feature type="chain" id="PRO_0000060805" description="Cytochrome b">
    <location>
        <begin position="1"/>
        <end position="379"/>
    </location>
</feature>
<feature type="transmembrane region" description="Helical" evidence="2">
    <location>
        <begin position="33"/>
        <end position="53"/>
    </location>
</feature>
<feature type="transmembrane region" description="Helical" evidence="2">
    <location>
        <begin position="77"/>
        <end position="98"/>
    </location>
</feature>
<feature type="transmembrane region" description="Helical" evidence="2">
    <location>
        <begin position="113"/>
        <end position="133"/>
    </location>
</feature>
<feature type="transmembrane region" description="Helical" evidence="2">
    <location>
        <begin position="178"/>
        <end position="198"/>
    </location>
</feature>
<feature type="transmembrane region" description="Helical" evidence="2">
    <location>
        <begin position="226"/>
        <end position="246"/>
    </location>
</feature>
<feature type="transmembrane region" description="Helical" evidence="2">
    <location>
        <begin position="288"/>
        <end position="308"/>
    </location>
</feature>
<feature type="transmembrane region" description="Helical" evidence="2">
    <location>
        <begin position="320"/>
        <end position="340"/>
    </location>
</feature>
<feature type="transmembrane region" description="Helical" evidence="2">
    <location>
        <begin position="347"/>
        <end position="367"/>
    </location>
</feature>
<feature type="binding site" description="axial binding residue" evidence="2">
    <location>
        <position position="83"/>
    </location>
    <ligand>
        <name>heme b</name>
        <dbReference type="ChEBI" id="CHEBI:60344"/>
        <label>b562</label>
    </ligand>
    <ligandPart>
        <name>Fe</name>
        <dbReference type="ChEBI" id="CHEBI:18248"/>
    </ligandPart>
</feature>
<feature type="binding site" description="axial binding residue" evidence="2">
    <location>
        <position position="97"/>
    </location>
    <ligand>
        <name>heme b</name>
        <dbReference type="ChEBI" id="CHEBI:60344"/>
        <label>b566</label>
    </ligand>
    <ligandPart>
        <name>Fe</name>
        <dbReference type="ChEBI" id="CHEBI:18248"/>
    </ligandPart>
</feature>
<feature type="binding site" description="axial binding residue" evidence="2">
    <location>
        <position position="182"/>
    </location>
    <ligand>
        <name>heme b</name>
        <dbReference type="ChEBI" id="CHEBI:60344"/>
        <label>b562</label>
    </ligand>
    <ligandPart>
        <name>Fe</name>
        <dbReference type="ChEBI" id="CHEBI:18248"/>
    </ligandPart>
</feature>
<feature type="binding site" description="axial binding residue" evidence="2">
    <location>
        <position position="196"/>
    </location>
    <ligand>
        <name>heme b</name>
        <dbReference type="ChEBI" id="CHEBI:60344"/>
        <label>b566</label>
    </ligand>
    <ligandPart>
        <name>Fe</name>
        <dbReference type="ChEBI" id="CHEBI:18248"/>
    </ligandPart>
</feature>
<feature type="binding site" evidence="2">
    <location>
        <position position="201"/>
    </location>
    <ligand>
        <name>a ubiquinone</name>
        <dbReference type="ChEBI" id="CHEBI:16389"/>
    </ligand>
</feature>
<reference key="1">
    <citation type="submission" date="1997-11" db="EMBL/GenBank/DDBJ databases">
        <title>Variation in complete cytochrome b gene sequences of four antelope species.</title>
        <authorList>
            <person name="Lieckfeldt D."/>
            <person name="Pitra C."/>
        </authorList>
    </citation>
    <scope>NUCLEOTIDE SEQUENCE [GENOMIC DNA]</scope>
    <source>
        <strain>Isolate Wibik-97</strain>
    </source>
</reference>
<proteinExistence type="inferred from homology"/>